<accession>P15956</accession>
<evidence type="ECO:0000250" key="1"/>
<evidence type="ECO:0000255" key="2"/>
<evidence type="ECO:0000305" key="3"/>
<proteinExistence type="inferred from homology"/>
<organism>
    <name type="scientific">Emericella nidulans</name>
    <name type="common">Aspergillus nidulans</name>
    <dbReference type="NCBI Taxonomy" id="162425"/>
    <lineage>
        <taxon>Eukaryota</taxon>
        <taxon>Fungi</taxon>
        <taxon>Dikarya</taxon>
        <taxon>Ascomycota</taxon>
        <taxon>Pezizomycotina</taxon>
        <taxon>Eurotiomycetes</taxon>
        <taxon>Eurotiomycetidae</taxon>
        <taxon>Eurotiales</taxon>
        <taxon>Aspergillaceae</taxon>
        <taxon>Aspergillus</taxon>
        <taxon>Aspergillus subgen. Nidulantes</taxon>
    </lineage>
</organism>
<dbReference type="EC" id="7.1.1.2"/>
<dbReference type="EMBL" id="X15441">
    <property type="protein sequence ID" value="CAA33480.1"/>
    <property type="molecule type" value="Genomic_DNA"/>
</dbReference>
<dbReference type="PIR" id="S05628">
    <property type="entry name" value="S05628"/>
</dbReference>
<dbReference type="SMR" id="P15956"/>
<dbReference type="GO" id="GO:0031966">
    <property type="term" value="C:mitochondrial membrane"/>
    <property type="evidence" value="ECO:0007669"/>
    <property type="project" value="UniProtKB-SubCell"/>
</dbReference>
<dbReference type="GO" id="GO:0030964">
    <property type="term" value="C:NADH dehydrogenase complex"/>
    <property type="evidence" value="ECO:0007669"/>
    <property type="project" value="TreeGrafter"/>
</dbReference>
<dbReference type="GO" id="GO:0008137">
    <property type="term" value="F:NADH dehydrogenase (ubiquinone) activity"/>
    <property type="evidence" value="ECO:0007669"/>
    <property type="project" value="UniProtKB-EC"/>
</dbReference>
<dbReference type="FunFam" id="1.20.58.1610:FF:000009">
    <property type="entry name" value="NADH-ubiquinone oxidoreductase chain 3"/>
    <property type="match status" value="1"/>
</dbReference>
<dbReference type="Gene3D" id="1.20.58.1610">
    <property type="entry name" value="NADH:ubiquinone/plastoquinone oxidoreductase, chain 3"/>
    <property type="match status" value="1"/>
</dbReference>
<dbReference type="InterPro" id="IPR000440">
    <property type="entry name" value="NADH_UbQ/plastoQ_OxRdtase_su3"/>
</dbReference>
<dbReference type="InterPro" id="IPR038430">
    <property type="entry name" value="NDAH_ubi_oxred_su3_sf"/>
</dbReference>
<dbReference type="PANTHER" id="PTHR11058">
    <property type="entry name" value="NADH-UBIQUINONE OXIDOREDUCTASE CHAIN 3"/>
    <property type="match status" value="1"/>
</dbReference>
<dbReference type="PANTHER" id="PTHR11058:SF9">
    <property type="entry name" value="NADH-UBIQUINONE OXIDOREDUCTASE CHAIN 3"/>
    <property type="match status" value="1"/>
</dbReference>
<dbReference type="Pfam" id="PF00507">
    <property type="entry name" value="Oxidored_q4"/>
    <property type="match status" value="1"/>
</dbReference>
<feature type="chain" id="PRO_0000117741" description="NADH-ubiquinone oxidoreductase chain 3">
    <location>
        <begin position="1"/>
        <end position="136"/>
    </location>
</feature>
<feature type="transmembrane region" description="Helical" evidence="2">
    <location>
        <begin position="5"/>
        <end position="25"/>
    </location>
</feature>
<feature type="transmembrane region" description="Helical" evidence="2">
    <location>
        <begin position="55"/>
        <end position="75"/>
    </location>
</feature>
<feature type="transmembrane region" description="Helical" evidence="2">
    <location>
        <begin position="85"/>
        <end position="105"/>
    </location>
</feature>
<protein>
    <recommendedName>
        <fullName>NADH-ubiquinone oxidoreductase chain 3</fullName>
        <ecNumber>7.1.1.2</ecNumber>
    </recommendedName>
    <alternativeName>
        <fullName>NADH dehydrogenase subunit 3</fullName>
    </alternativeName>
</protein>
<comment type="function">
    <text evidence="1">Core subunit of the mitochondrial membrane respiratory chain NADH dehydrogenase (Complex I) that is believed to belong to the minimal assembly required for catalysis. Complex I functions in the transfer of electrons from NADH to the respiratory chain. The immediate electron acceptor for the enzyme is believed to be ubiquinone (By similarity).</text>
</comment>
<comment type="catalytic activity">
    <reaction>
        <text>a ubiquinone + NADH + 5 H(+)(in) = a ubiquinol + NAD(+) + 4 H(+)(out)</text>
        <dbReference type="Rhea" id="RHEA:29091"/>
        <dbReference type="Rhea" id="RHEA-COMP:9565"/>
        <dbReference type="Rhea" id="RHEA-COMP:9566"/>
        <dbReference type="ChEBI" id="CHEBI:15378"/>
        <dbReference type="ChEBI" id="CHEBI:16389"/>
        <dbReference type="ChEBI" id="CHEBI:17976"/>
        <dbReference type="ChEBI" id="CHEBI:57540"/>
        <dbReference type="ChEBI" id="CHEBI:57945"/>
        <dbReference type="EC" id="7.1.1.2"/>
    </reaction>
</comment>
<comment type="subcellular location">
    <subcellularLocation>
        <location evidence="1">Mitochondrion membrane</location>
        <topology evidence="1">Multi-pass membrane protein</topology>
    </subcellularLocation>
</comment>
<comment type="similarity">
    <text evidence="3">Belongs to the complex I subunit 3 family.</text>
</comment>
<name>NU3M_EMEND</name>
<geneLocation type="mitochondrion"/>
<keyword id="KW-0249">Electron transport</keyword>
<keyword id="KW-0472">Membrane</keyword>
<keyword id="KW-0496">Mitochondrion</keyword>
<keyword id="KW-0520">NAD</keyword>
<keyword id="KW-0679">Respiratory chain</keyword>
<keyword id="KW-1278">Translocase</keyword>
<keyword id="KW-0812">Transmembrane</keyword>
<keyword id="KW-1133">Transmembrane helix</keyword>
<keyword id="KW-0813">Transport</keyword>
<keyword id="KW-0830">Ubiquinone</keyword>
<gene>
    <name type="primary">nd3</name>
    <name type="synonym">ndhC</name>
</gene>
<sequence length="136" mass="15650">MTTTTFFLFLIPVLAIILLAVNLIFSPHNPYQEKDSAFECGFHSFLGQNRTQFSISFFIFALLFLLFDLEILLVYPYVVSAYTNGIYGLVIMLVFFLVGTLGFAFELGKNALKIESRQVYNFNYKSWSGYSLIYNK</sequence>
<reference key="1">
    <citation type="journal article" date="1989" name="J. Mol. Biol.">
        <title>Processing of mitochondrial RNA in Aspergillus nidulans.</title>
        <authorList>
            <person name="Dyson N.J."/>
            <person name="Brown T.A."/>
            <person name="Ray J.A."/>
            <person name="Waring R.B."/>
            <person name="Scazzocchio C."/>
            <person name="Davies R.W."/>
        </authorList>
    </citation>
    <scope>NUCLEOTIDE SEQUENCE [GENOMIC DNA]</scope>
    <source>
        <strain>yA2 pyroA4 cnxC3</strain>
    </source>
</reference>